<gene>
    <name evidence="1" type="primary">pth</name>
    <name type="ordered locus">RoseRS_1001</name>
</gene>
<sequence length="217" mass="24002">MWLIVGLGNPGDTYARTRHNIGFRVVSELAQRHRLEFTHKRAHARIAEGIIAGQRVALALPQTYMNLSGQAVVGLRQWYKIDPATELLVVYDDVDLPFGVLRLRERGSAGTHNGMRSIITLLGSQVFPRLRIGIDRPPPAWDLADYVLGRFTPEQEAQLPDIMQKAADALETVVREGMAVAMNRINAPPPKPKREQKRSSDAPDSSSDTNTSNASDG</sequence>
<accession>A5US07</accession>
<comment type="function">
    <text evidence="1">Hydrolyzes ribosome-free peptidyl-tRNAs (with 1 or more amino acids incorporated), which drop off the ribosome during protein synthesis, or as a result of ribosome stalling.</text>
</comment>
<comment type="function">
    <text evidence="1">Catalyzes the release of premature peptidyl moieties from peptidyl-tRNA molecules trapped in stalled 50S ribosomal subunits, and thus maintains levels of free tRNAs and 50S ribosomes.</text>
</comment>
<comment type="catalytic activity">
    <reaction evidence="1">
        <text>an N-acyl-L-alpha-aminoacyl-tRNA + H2O = an N-acyl-L-amino acid + a tRNA + H(+)</text>
        <dbReference type="Rhea" id="RHEA:54448"/>
        <dbReference type="Rhea" id="RHEA-COMP:10123"/>
        <dbReference type="Rhea" id="RHEA-COMP:13883"/>
        <dbReference type="ChEBI" id="CHEBI:15377"/>
        <dbReference type="ChEBI" id="CHEBI:15378"/>
        <dbReference type="ChEBI" id="CHEBI:59874"/>
        <dbReference type="ChEBI" id="CHEBI:78442"/>
        <dbReference type="ChEBI" id="CHEBI:138191"/>
        <dbReference type="EC" id="3.1.1.29"/>
    </reaction>
</comment>
<comment type="subunit">
    <text evidence="1">Monomer.</text>
</comment>
<comment type="subcellular location">
    <subcellularLocation>
        <location evidence="1">Cytoplasm</location>
    </subcellularLocation>
</comment>
<comment type="similarity">
    <text evidence="1">Belongs to the PTH family.</text>
</comment>
<name>PTH_ROSS1</name>
<feature type="chain" id="PRO_1000010644" description="Peptidyl-tRNA hydrolase">
    <location>
        <begin position="1"/>
        <end position="217"/>
    </location>
</feature>
<feature type="region of interest" description="Disordered" evidence="2">
    <location>
        <begin position="182"/>
        <end position="217"/>
    </location>
</feature>
<feature type="compositionally biased region" description="Low complexity" evidence="2">
    <location>
        <begin position="202"/>
        <end position="217"/>
    </location>
</feature>
<feature type="active site" description="Proton acceptor" evidence="1">
    <location>
        <position position="19"/>
    </location>
</feature>
<feature type="binding site" evidence="1">
    <location>
        <position position="14"/>
    </location>
    <ligand>
        <name>tRNA</name>
        <dbReference type="ChEBI" id="CHEBI:17843"/>
    </ligand>
</feature>
<feature type="binding site" evidence="1">
    <location>
        <position position="64"/>
    </location>
    <ligand>
        <name>tRNA</name>
        <dbReference type="ChEBI" id="CHEBI:17843"/>
    </ligand>
</feature>
<feature type="binding site" evidence="1">
    <location>
        <position position="66"/>
    </location>
    <ligand>
        <name>tRNA</name>
        <dbReference type="ChEBI" id="CHEBI:17843"/>
    </ligand>
</feature>
<feature type="binding site" evidence="1">
    <location>
        <position position="113"/>
    </location>
    <ligand>
        <name>tRNA</name>
        <dbReference type="ChEBI" id="CHEBI:17843"/>
    </ligand>
</feature>
<feature type="site" description="Discriminates between blocked and unblocked aminoacyl-tRNA" evidence="1">
    <location>
        <position position="9"/>
    </location>
</feature>
<feature type="site" description="Stabilizes the basic form of H active site to accept a proton" evidence="1">
    <location>
        <position position="92"/>
    </location>
</feature>
<organism>
    <name type="scientific">Roseiflexus sp. (strain RS-1)</name>
    <dbReference type="NCBI Taxonomy" id="357808"/>
    <lineage>
        <taxon>Bacteria</taxon>
        <taxon>Bacillati</taxon>
        <taxon>Chloroflexota</taxon>
        <taxon>Chloroflexia</taxon>
        <taxon>Chloroflexales</taxon>
        <taxon>Roseiflexineae</taxon>
        <taxon>Roseiflexaceae</taxon>
        <taxon>Roseiflexus</taxon>
    </lineage>
</organism>
<dbReference type="EC" id="3.1.1.29" evidence="1"/>
<dbReference type="EMBL" id="CP000686">
    <property type="protein sequence ID" value="ABQ89410.1"/>
    <property type="molecule type" value="Genomic_DNA"/>
</dbReference>
<dbReference type="RefSeq" id="WP_011955763.1">
    <property type="nucleotide sequence ID" value="NC_009523.1"/>
</dbReference>
<dbReference type="SMR" id="A5US07"/>
<dbReference type="STRING" id="357808.RoseRS_1001"/>
<dbReference type="KEGG" id="rrs:RoseRS_1001"/>
<dbReference type="eggNOG" id="COG0193">
    <property type="taxonomic scope" value="Bacteria"/>
</dbReference>
<dbReference type="HOGENOM" id="CLU_062456_4_1_0"/>
<dbReference type="OrthoDB" id="9800507at2"/>
<dbReference type="Proteomes" id="UP000006554">
    <property type="component" value="Chromosome"/>
</dbReference>
<dbReference type="GO" id="GO:0005737">
    <property type="term" value="C:cytoplasm"/>
    <property type="evidence" value="ECO:0007669"/>
    <property type="project" value="UniProtKB-SubCell"/>
</dbReference>
<dbReference type="GO" id="GO:0004045">
    <property type="term" value="F:peptidyl-tRNA hydrolase activity"/>
    <property type="evidence" value="ECO:0007669"/>
    <property type="project" value="UniProtKB-UniRule"/>
</dbReference>
<dbReference type="GO" id="GO:0000049">
    <property type="term" value="F:tRNA binding"/>
    <property type="evidence" value="ECO:0007669"/>
    <property type="project" value="UniProtKB-UniRule"/>
</dbReference>
<dbReference type="GO" id="GO:0006515">
    <property type="term" value="P:protein quality control for misfolded or incompletely synthesized proteins"/>
    <property type="evidence" value="ECO:0007669"/>
    <property type="project" value="UniProtKB-UniRule"/>
</dbReference>
<dbReference type="GO" id="GO:0072344">
    <property type="term" value="P:rescue of stalled ribosome"/>
    <property type="evidence" value="ECO:0007669"/>
    <property type="project" value="UniProtKB-UniRule"/>
</dbReference>
<dbReference type="CDD" id="cd00462">
    <property type="entry name" value="PTH"/>
    <property type="match status" value="1"/>
</dbReference>
<dbReference type="FunFam" id="3.40.50.1470:FF:000001">
    <property type="entry name" value="Peptidyl-tRNA hydrolase"/>
    <property type="match status" value="1"/>
</dbReference>
<dbReference type="Gene3D" id="3.40.50.1470">
    <property type="entry name" value="Peptidyl-tRNA hydrolase"/>
    <property type="match status" value="1"/>
</dbReference>
<dbReference type="HAMAP" id="MF_00083">
    <property type="entry name" value="Pept_tRNA_hydro_bact"/>
    <property type="match status" value="1"/>
</dbReference>
<dbReference type="InterPro" id="IPR001328">
    <property type="entry name" value="Pept_tRNA_hydro"/>
</dbReference>
<dbReference type="InterPro" id="IPR018171">
    <property type="entry name" value="Pept_tRNA_hydro_CS"/>
</dbReference>
<dbReference type="InterPro" id="IPR036416">
    <property type="entry name" value="Pept_tRNA_hydro_sf"/>
</dbReference>
<dbReference type="NCBIfam" id="TIGR00447">
    <property type="entry name" value="pth"/>
    <property type="match status" value="1"/>
</dbReference>
<dbReference type="PANTHER" id="PTHR17224">
    <property type="entry name" value="PEPTIDYL-TRNA HYDROLASE"/>
    <property type="match status" value="1"/>
</dbReference>
<dbReference type="PANTHER" id="PTHR17224:SF1">
    <property type="entry name" value="PEPTIDYL-TRNA HYDROLASE"/>
    <property type="match status" value="1"/>
</dbReference>
<dbReference type="Pfam" id="PF01195">
    <property type="entry name" value="Pept_tRNA_hydro"/>
    <property type="match status" value="1"/>
</dbReference>
<dbReference type="SUPFAM" id="SSF53178">
    <property type="entry name" value="Peptidyl-tRNA hydrolase-like"/>
    <property type="match status" value="1"/>
</dbReference>
<dbReference type="PROSITE" id="PS01196">
    <property type="entry name" value="PEPT_TRNA_HYDROL_2"/>
    <property type="match status" value="1"/>
</dbReference>
<evidence type="ECO:0000255" key="1">
    <source>
        <dbReference type="HAMAP-Rule" id="MF_00083"/>
    </source>
</evidence>
<evidence type="ECO:0000256" key="2">
    <source>
        <dbReference type="SAM" id="MobiDB-lite"/>
    </source>
</evidence>
<protein>
    <recommendedName>
        <fullName evidence="1">Peptidyl-tRNA hydrolase</fullName>
        <shortName evidence="1">Pth</shortName>
        <ecNumber evidence="1">3.1.1.29</ecNumber>
    </recommendedName>
</protein>
<reference key="1">
    <citation type="submission" date="2007-04" db="EMBL/GenBank/DDBJ databases">
        <title>Complete sequence of Roseiflexus sp. RS-1.</title>
        <authorList>
            <consortium name="US DOE Joint Genome Institute"/>
            <person name="Copeland A."/>
            <person name="Lucas S."/>
            <person name="Lapidus A."/>
            <person name="Barry K."/>
            <person name="Detter J.C."/>
            <person name="Glavina del Rio T."/>
            <person name="Hammon N."/>
            <person name="Israni S."/>
            <person name="Dalin E."/>
            <person name="Tice H."/>
            <person name="Pitluck S."/>
            <person name="Chertkov O."/>
            <person name="Brettin T."/>
            <person name="Bruce D."/>
            <person name="Han C."/>
            <person name="Schmutz J."/>
            <person name="Larimer F."/>
            <person name="Land M."/>
            <person name="Hauser L."/>
            <person name="Kyrpides N."/>
            <person name="Mikhailova N."/>
            <person name="Bryant D.A."/>
            <person name="Richardson P."/>
        </authorList>
    </citation>
    <scope>NUCLEOTIDE SEQUENCE [LARGE SCALE GENOMIC DNA]</scope>
    <source>
        <strain>RS-1</strain>
    </source>
</reference>
<keyword id="KW-0963">Cytoplasm</keyword>
<keyword id="KW-0378">Hydrolase</keyword>
<keyword id="KW-0694">RNA-binding</keyword>
<keyword id="KW-0820">tRNA-binding</keyword>
<proteinExistence type="inferred from homology"/>